<proteinExistence type="inferred from homology"/>
<accession>Q12F57</accession>
<keyword id="KW-1003">Cell membrane</keyword>
<keyword id="KW-0472">Membrane</keyword>
<keyword id="KW-1185">Reference proteome</keyword>
<keyword id="KW-0812">Transmembrane</keyword>
<keyword id="KW-1133">Transmembrane helix</keyword>
<feature type="chain" id="PRO_0000256757" description="UPF0391 membrane protein Bpro_0879">
    <location>
        <begin position="1"/>
        <end position="54"/>
    </location>
</feature>
<feature type="transmembrane region" description="Helical" evidence="1">
    <location>
        <begin position="6"/>
        <end position="26"/>
    </location>
</feature>
<feature type="transmembrane region" description="Helical" evidence="1">
    <location>
        <begin position="30"/>
        <end position="50"/>
    </location>
</feature>
<protein>
    <recommendedName>
        <fullName evidence="1">UPF0391 membrane protein Bpro_0879</fullName>
    </recommendedName>
</protein>
<organism>
    <name type="scientific">Polaromonas sp. (strain JS666 / ATCC BAA-500)</name>
    <dbReference type="NCBI Taxonomy" id="296591"/>
    <lineage>
        <taxon>Bacteria</taxon>
        <taxon>Pseudomonadati</taxon>
        <taxon>Pseudomonadota</taxon>
        <taxon>Betaproteobacteria</taxon>
        <taxon>Burkholderiales</taxon>
        <taxon>Comamonadaceae</taxon>
        <taxon>Polaromonas</taxon>
    </lineage>
</organism>
<name>Y879_POLSJ</name>
<gene>
    <name type="ordered locus">Bpro_0879</name>
</gene>
<reference key="1">
    <citation type="journal article" date="2008" name="Appl. Environ. Microbiol.">
        <title>The genome of Polaromonas sp. strain JS666: insights into the evolution of a hydrocarbon- and xenobiotic-degrading bacterium, and features of relevance to biotechnology.</title>
        <authorList>
            <person name="Mattes T.E."/>
            <person name="Alexander A.K."/>
            <person name="Richardson P.M."/>
            <person name="Munk A.C."/>
            <person name="Han C.S."/>
            <person name="Stothard P."/>
            <person name="Coleman N.V."/>
        </authorList>
    </citation>
    <scope>NUCLEOTIDE SEQUENCE [LARGE SCALE GENOMIC DNA]</scope>
    <source>
        <strain>JS666 / ATCC BAA-500</strain>
    </source>
</reference>
<evidence type="ECO:0000255" key="1">
    <source>
        <dbReference type="HAMAP-Rule" id="MF_01361"/>
    </source>
</evidence>
<sequence length="54" mass="5747">MLHYSVVFLVIALIAAIFGFGGIAAGAVEIAKILFFIFAIMAVVSFVMGLIKKN</sequence>
<dbReference type="EMBL" id="CP000316">
    <property type="protein sequence ID" value="ABE42835.1"/>
    <property type="molecule type" value="Genomic_DNA"/>
</dbReference>
<dbReference type="RefSeq" id="WP_011481837.1">
    <property type="nucleotide sequence ID" value="NC_007948.1"/>
</dbReference>
<dbReference type="SMR" id="Q12F57"/>
<dbReference type="STRING" id="296591.Bpro_0879"/>
<dbReference type="KEGG" id="pol:Bpro_0879"/>
<dbReference type="eggNOG" id="COG5487">
    <property type="taxonomic scope" value="Bacteria"/>
</dbReference>
<dbReference type="HOGENOM" id="CLU_187346_0_1_4"/>
<dbReference type="Proteomes" id="UP000001983">
    <property type="component" value="Chromosome"/>
</dbReference>
<dbReference type="GO" id="GO:0005886">
    <property type="term" value="C:plasma membrane"/>
    <property type="evidence" value="ECO:0007669"/>
    <property type="project" value="UniProtKB-SubCell"/>
</dbReference>
<dbReference type="HAMAP" id="MF_01361">
    <property type="entry name" value="UPF0391"/>
    <property type="match status" value="1"/>
</dbReference>
<dbReference type="InterPro" id="IPR009760">
    <property type="entry name" value="DUF1328"/>
</dbReference>
<dbReference type="NCBIfam" id="NF010226">
    <property type="entry name" value="PRK13682.1-1"/>
    <property type="match status" value="1"/>
</dbReference>
<dbReference type="NCBIfam" id="NF010229">
    <property type="entry name" value="PRK13682.1-4"/>
    <property type="match status" value="1"/>
</dbReference>
<dbReference type="Pfam" id="PF07043">
    <property type="entry name" value="DUF1328"/>
    <property type="match status" value="1"/>
</dbReference>
<dbReference type="PIRSF" id="PIRSF036466">
    <property type="entry name" value="UCP036466"/>
    <property type="match status" value="1"/>
</dbReference>
<comment type="subcellular location">
    <subcellularLocation>
        <location evidence="1">Cell membrane</location>
        <topology evidence="1">Multi-pass membrane protein</topology>
    </subcellularLocation>
</comment>
<comment type="similarity">
    <text evidence="1">Belongs to the UPF0391 family.</text>
</comment>